<sequence length="134" mass="14283">MLRTMLKSKIHRATVTQADLHYVGSVTVDADLMDAADLLEGEQVTIVDVDNGARLVTYVITGERGSGVIGINGAAAHLIHPGDLVILIAYGMLDDAAARTYEPRVVFVDADNRVLDLGADPAFVPDTAELLSPR</sequence>
<name>PAND_MYCGI</name>
<keyword id="KW-0068">Autocatalytic cleavage</keyword>
<keyword id="KW-0963">Cytoplasm</keyword>
<keyword id="KW-0210">Decarboxylase</keyword>
<keyword id="KW-0456">Lyase</keyword>
<keyword id="KW-0566">Pantothenate biosynthesis</keyword>
<keyword id="KW-0670">Pyruvate</keyword>
<keyword id="KW-0704">Schiff base</keyword>
<keyword id="KW-0865">Zymogen</keyword>
<accession>A4T5N4</accession>
<dbReference type="EC" id="4.1.1.11" evidence="1"/>
<dbReference type="EMBL" id="CP000656">
    <property type="protein sequence ID" value="ABP43907.1"/>
    <property type="molecule type" value="Genomic_DNA"/>
</dbReference>
<dbReference type="SMR" id="A4T5N4"/>
<dbReference type="STRING" id="350054.Mflv_1425"/>
<dbReference type="KEGG" id="mgi:Mflv_1425"/>
<dbReference type="eggNOG" id="COG0853">
    <property type="taxonomic scope" value="Bacteria"/>
</dbReference>
<dbReference type="HOGENOM" id="CLU_115305_2_0_11"/>
<dbReference type="OrthoDB" id="9803983at2"/>
<dbReference type="UniPathway" id="UPA00028">
    <property type="reaction ID" value="UER00002"/>
</dbReference>
<dbReference type="GO" id="GO:0005829">
    <property type="term" value="C:cytosol"/>
    <property type="evidence" value="ECO:0007669"/>
    <property type="project" value="TreeGrafter"/>
</dbReference>
<dbReference type="GO" id="GO:0004068">
    <property type="term" value="F:aspartate 1-decarboxylase activity"/>
    <property type="evidence" value="ECO:0007669"/>
    <property type="project" value="UniProtKB-UniRule"/>
</dbReference>
<dbReference type="GO" id="GO:0006523">
    <property type="term" value="P:alanine biosynthetic process"/>
    <property type="evidence" value="ECO:0007669"/>
    <property type="project" value="InterPro"/>
</dbReference>
<dbReference type="GO" id="GO:0015940">
    <property type="term" value="P:pantothenate biosynthetic process"/>
    <property type="evidence" value="ECO:0007669"/>
    <property type="project" value="UniProtKB-UniRule"/>
</dbReference>
<dbReference type="CDD" id="cd06919">
    <property type="entry name" value="Asp_decarbox"/>
    <property type="match status" value="1"/>
</dbReference>
<dbReference type="Gene3D" id="2.40.40.20">
    <property type="match status" value="1"/>
</dbReference>
<dbReference type="HAMAP" id="MF_00446">
    <property type="entry name" value="PanD"/>
    <property type="match status" value="1"/>
</dbReference>
<dbReference type="InterPro" id="IPR009010">
    <property type="entry name" value="Asp_de-COase-like_dom_sf"/>
</dbReference>
<dbReference type="InterPro" id="IPR003190">
    <property type="entry name" value="Asp_decarbox"/>
</dbReference>
<dbReference type="NCBIfam" id="TIGR00223">
    <property type="entry name" value="panD"/>
    <property type="match status" value="1"/>
</dbReference>
<dbReference type="PANTHER" id="PTHR21012">
    <property type="entry name" value="ASPARTATE 1-DECARBOXYLASE"/>
    <property type="match status" value="1"/>
</dbReference>
<dbReference type="PANTHER" id="PTHR21012:SF0">
    <property type="entry name" value="ASPARTATE 1-DECARBOXYLASE"/>
    <property type="match status" value="1"/>
</dbReference>
<dbReference type="Pfam" id="PF02261">
    <property type="entry name" value="Asp_decarbox"/>
    <property type="match status" value="1"/>
</dbReference>
<dbReference type="PIRSF" id="PIRSF006246">
    <property type="entry name" value="Asp_decarbox"/>
    <property type="match status" value="1"/>
</dbReference>
<dbReference type="SUPFAM" id="SSF50692">
    <property type="entry name" value="ADC-like"/>
    <property type="match status" value="1"/>
</dbReference>
<reference key="1">
    <citation type="submission" date="2007-04" db="EMBL/GenBank/DDBJ databases">
        <title>Complete sequence of chromosome of Mycobacterium gilvum PYR-GCK.</title>
        <authorList>
            <consortium name="US DOE Joint Genome Institute"/>
            <person name="Copeland A."/>
            <person name="Lucas S."/>
            <person name="Lapidus A."/>
            <person name="Barry K."/>
            <person name="Detter J.C."/>
            <person name="Glavina del Rio T."/>
            <person name="Hammon N."/>
            <person name="Israni S."/>
            <person name="Dalin E."/>
            <person name="Tice H."/>
            <person name="Pitluck S."/>
            <person name="Chain P."/>
            <person name="Malfatti S."/>
            <person name="Shin M."/>
            <person name="Vergez L."/>
            <person name="Schmutz J."/>
            <person name="Larimer F."/>
            <person name="Land M."/>
            <person name="Hauser L."/>
            <person name="Kyrpides N."/>
            <person name="Mikhailova N."/>
            <person name="Miller C."/>
            <person name="Richardson P."/>
        </authorList>
    </citation>
    <scope>NUCLEOTIDE SEQUENCE [LARGE SCALE GENOMIC DNA]</scope>
    <source>
        <strain>PYR-GCK</strain>
    </source>
</reference>
<protein>
    <recommendedName>
        <fullName evidence="1">Aspartate 1-decarboxylase</fullName>
        <ecNumber evidence="1">4.1.1.11</ecNumber>
    </recommendedName>
    <alternativeName>
        <fullName evidence="1">Aspartate alpha-decarboxylase</fullName>
    </alternativeName>
    <component>
        <recommendedName>
            <fullName evidence="1">Aspartate 1-decarboxylase beta chain</fullName>
        </recommendedName>
    </component>
    <component>
        <recommendedName>
            <fullName evidence="1">Aspartate 1-decarboxylase alpha chain</fullName>
        </recommendedName>
    </component>
</protein>
<evidence type="ECO:0000255" key="1">
    <source>
        <dbReference type="HAMAP-Rule" id="MF_00446"/>
    </source>
</evidence>
<organism>
    <name type="scientific">Mycolicibacterium gilvum (strain PYR-GCK)</name>
    <name type="common">Mycobacterium gilvum (strain PYR-GCK)</name>
    <dbReference type="NCBI Taxonomy" id="350054"/>
    <lineage>
        <taxon>Bacteria</taxon>
        <taxon>Bacillati</taxon>
        <taxon>Actinomycetota</taxon>
        <taxon>Actinomycetes</taxon>
        <taxon>Mycobacteriales</taxon>
        <taxon>Mycobacteriaceae</taxon>
        <taxon>Mycolicibacterium</taxon>
    </lineage>
</organism>
<gene>
    <name evidence="1" type="primary">panD</name>
    <name type="ordered locus">Mflv_1425</name>
</gene>
<comment type="function">
    <text evidence="1">Catalyzes the pyruvoyl-dependent decarboxylation of aspartate to produce beta-alanine.</text>
</comment>
<comment type="catalytic activity">
    <reaction evidence="1">
        <text>L-aspartate + H(+) = beta-alanine + CO2</text>
        <dbReference type="Rhea" id="RHEA:19497"/>
        <dbReference type="ChEBI" id="CHEBI:15378"/>
        <dbReference type="ChEBI" id="CHEBI:16526"/>
        <dbReference type="ChEBI" id="CHEBI:29991"/>
        <dbReference type="ChEBI" id="CHEBI:57966"/>
        <dbReference type="EC" id="4.1.1.11"/>
    </reaction>
</comment>
<comment type="cofactor">
    <cofactor evidence="1">
        <name>pyruvate</name>
        <dbReference type="ChEBI" id="CHEBI:15361"/>
    </cofactor>
    <text evidence="1">Binds 1 pyruvoyl group covalently per subunit.</text>
</comment>
<comment type="pathway">
    <text evidence="1">Cofactor biosynthesis; (R)-pantothenate biosynthesis; beta-alanine from L-aspartate: step 1/1.</text>
</comment>
<comment type="subunit">
    <text evidence="1">Heterooctamer of four alpha and four beta subunits.</text>
</comment>
<comment type="subcellular location">
    <subcellularLocation>
        <location evidence="1">Cytoplasm</location>
    </subcellularLocation>
</comment>
<comment type="PTM">
    <text evidence="1">Is synthesized initially as an inactive proenzyme, which is activated by self-cleavage at a specific serine bond to produce a beta-subunit with a hydroxyl group at its C-terminus and an alpha-subunit with a pyruvoyl group at its N-terminus.</text>
</comment>
<comment type="similarity">
    <text evidence="1">Belongs to the PanD family.</text>
</comment>
<feature type="chain" id="PRO_1000080926" description="Aspartate 1-decarboxylase beta chain" evidence="1">
    <location>
        <begin position="1"/>
        <end position="24"/>
    </location>
</feature>
<feature type="chain" id="PRO_1000080927" description="Aspartate 1-decarboxylase alpha chain" evidence="1">
    <location>
        <begin position="25"/>
        <end position="134"/>
    </location>
</feature>
<feature type="active site" description="Schiff-base intermediate with substrate; via pyruvic acid" evidence="1">
    <location>
        <position position="25"/>
    </location>
</feature>
<feature type="active site" description="Proton donor" evidence="1">
    <location>
        <position position="58"/>
    </location>
</feature>
<feature type="binding site" evidence="1">
    <location>
        <position position="57"/>
    </location>
    <ligand>
        <name>substrate</name>
    </ligand>
</feature>
<feature type="binding site" evidence="1">
    <location>
        <begin position="73"/>
        <end position="75"/>
    </location>
    <ligand>
        <name>substrate</name>
    </ligand>
</feature>
<feature type="modified residue" description="Pyruvic acid (Ser)" evidence="1">
    <location>
        <position position="25"/>
    </location>
</feature>
<proteinExistence type="inferred from homology"/>